<proteinExistence type="inferred from homology"/>
<protein>
    <recommendedName>
        <fullName>Anthranilate synthase component 1</fullName>
        <shortName>AS</shortName>
        <shortName>ASI</shortName>
        <ecNumber>4.1.3.27</ecNumber>
    </recommendedName>
</protein>
<dbReference type="EC" id="4.1.3.27"/>
<dbReference type="EMBL" id="AJ242841">
    <property type="protein sequence ID" value="CAB44973.1"/>
    <property type="molecule type" value="Genomic_DNA"/>
</dbReference>
<dbReference type="EMBL" id="AL157959">
    <property type="protein sequence ID" value="CAM08436.1"/>
    <property type="molecule type" value="Genomic_DNA"/>
</dbReference>
<dbReference type="PIR" id="G81892">
    <property type="entry name" value="G81892"/>
</dbReference>
<dbReference type="RefSeq" id="WP_002225282.1">
    <property type="nucleotide sequence ID" value="NC_003116.1"/>
</dbReference>
<dbReference type="SMR" id="Q9XAZ0"/>
<dbReference type="EnsemblBacteria" id="CAM08436">
    <property type="protein sequence ID" value="CAM08436"/>
    <property type="gene ID" value="NMA1247"/>
</dbReference>
<dbReference type="GeneID" id="93386149"/>
<dbReference type="KEGG" id="nma:NMA1247"/>
<dbReference type="HOGENOM" id="CLU_006493_9_3_4"/>
<dbReference type="UniPathway" id="UPA00035">
    <property type="reaction ID" value="UER00040"/>
</dbReference>
<dbReference type="Proteomes" id="UP000000626">
    <property type="component" value="Chromosome"/>
</dbReference>
<dbReference type="GO" id="GO:0004049">
    <property type="term" value="F:anthranilate synthase activity"/>
    <property type="evidence" value="ECO:0007669"/>
    <property type="project" value="UniProtKB-EC"/>
</dbReference>
<dbReference type="GO" id="GO:0046872">
    <property type="term" value="F:metal ion binding"/>
    <property type="evidence" value="ECO:0007669"/>
    <property type="project" value="UniProtKB-KW"/>
</dbReference>
<dbReference type="GO" id="GO:0000162">
    <property type="term" value="P:L-tryptophan biosynthetic process"/>
    <property type="evidence" value="ECO:0007669"/>
    <property type="project" value="UniProtKB-UniPathway"/>
</dbReference>
<dbReference type="Gene3D" id="3.60.120.10">
    <property type="entry name" value="Anthranilate synthase"/>
    <property type="match status" value="1"/>
</dbReference>
<dbReference type="InterPro" id="IPR005801">
    <property type="entry name" value="ADC_synthase"/>
</dbReference>
<dbReference type="InterPro" id="IPR019999">
    <property type="entry name" value="Anth_synth_I-like"/>
</dbReference>
<dbReference type="InterPro" id="IPR006805">
    <property type="entry name" value="Anth_synth_I_N"/>
</dbReference>
<dbReference type="InterPro" id="IPR005256">
    <property type="entry name" value="Anth_synth_I_PabB"/>
</dbReference>
<dbReference type="InterPro" id="IPR015890">
    <property type="entry name" value="Chorismate_C"/>
</dbReference>
<dbReference type="NCBIfam" id="TIGR00564">
    <property type="entry name" value="trpE_most"/>
    <property type="match status" value="1"/>
</dbReference>
<dbReference type="PANTHER" id="PTHR11236">
    <property type="entry name" value="AMINOBENZOATE/ANTHRANILATE SYNTHASE"/>
    <property type="match status" value="1"/>
</dbReference>
<dbReference type="PANTHER" id="PTHR11236:SF48">
    <property type="entry name" value="ISOCHORISMATE SYNTHASE MENF"/>
    <property type="match status" value="1"/>
</dbReference>
<dbReference type="Pfam" id="PF04715">
    <property type="entry name" value="Anth_synt_I_N"/>
    <property type="match status" value="1"/>
</dbReference>
<dbReference type="Pfam" id="PF00425">
    <property type="entry name" value="Chorismate_bind"/>
    <property type="match status" value="1"/>
</dbReference>
<dbReference type="PRINTS" id="PR00095">
    <property type="entry name" value="ANTSNTHASEI"/>
</dbReference>
<dbReference type="SUPFAM" id="SSF56322">
    <property type="entry name" value="ADC synthase"/>
    <property type="match status" value="1"/>
</dbReference>
<keyword id="KW-0028">Amino-acid biosynthesis</keyword>
<keyword id="KW-0057">Aromatic amino acid biosynthesis</keyword>
<keyword id="KW-0456">Lyase</keyword>
<keyword id="KW-0460">Magnesium</keyword>
<keyword id="KW-0479">Metal-binding</keyword>
<keyword id="KW-0822">Tryptophan biosynthesis</keyword>
<gene>
    <name type="primary">trpE</name>
    <name type="ordered locus">NMA1247</name>
</gene>
<accession>Q9XAZ0</accession>
<accession>A1IRP3</accession>
<comment type="function">
    <text evidence="1">Part of a heterotetrameric complex that catalyzes the two-step biosynthesis of anthranilate, an intermediate in the biosynthesis of L-tryptophan. In the first step, the glutamine-binding beta subunit (TrpG) of anthranilate synthase (AS) provides the glutamine amidotransferase activity which generates ammonia as a substrate that, along with chorismate, is used in the second step, catalyzed by the large alpha subunit of AS (TrpE) to produce anthranilate. In the absence of TrpG, TrpE can synthesize anthranilate directly from chorismate and high concentrations of ammonia (By similarity).</text>
</comment>
<comment type="catalytic activity">
    <reaction>
        <text>chorismate + L-glutamine = anthranilate + pyruvate + L-glutamate + H(+)</text>
        <dbReference type="Rhea" id="RHEA:21732"/>
        <dbReference type="ChEBI" id="CHEBI:15361"/>
        <dbReference type="ChEBI" id="CHEBI:15378"/>
        <dbReference type="ChEBI" id="CHEBI:16567"/>
        <dbReference type="ChEBI" id="CHEBI:29748"/>
        <dbReference type="ChEBI" id="CHEBI:29985"/>
        <dbReference type="ChEBI" id="CHEBI:58359"/>
        <dbReference type="EC" id="4.1.3.27"/>
    </reaction>
</comment>
<comment type="cofactor">
    <cofactor evidence="2">
        <name>Mg(2+)</name>
        <dbReference type="ChEBI" id="CHEBI:18420"/>
    </cofactor>
    <text evidence="2">Binds 1 Mg(2+) ion per subunit.</text>
</comment>
<comment type="activity regulation">
    <text evidence="1">Feedback inhibited by tryptophan.</text>
</comment>
<comment type="pathway">
    <text>Amino-acid biosynthesis; L-tryptophan biosynthesis; L-tryptophan from chorismate: step 1/5.</text>
</comment>
<comment type="subunit">
    <text evidence="1">Heterotetramer consisting of two non-identical subunits: a beta subunit (TrpG) and a large alpha subunit (TrpE).</text>
</comment>
<comment type="similarity">
    <text evidence="3">Belongs to the anthranilate synthase component I family.</text>
</comment>
<name>TRPE_NEIMA</name>
<feature type="chain" id="PRO_0000154103" description="Anthranilate synthase component 1">
    <location>
        <begin position="1"/>
        <end position="491"/>
    </location>
</feature>
<feature type="binding site" evidence="2">
    <location>
        <position position="49"/>
    </location>
    <ligand>
        <name>L-tryptophan</name>
        <dbReference type="ChEBI" id="CHEBI:57912"/>
    </ligand>
</feature>
<feature type="binding site" evidence="2">
    <location>
        <begin position="271"/>
        <end position="273"/>
    </location>
    <ligand>
        <name>L-tryptophan</name>
        <dbReference type="ChEBI" id="CHEBI:57912"/>
    </ligand>
</feature>
<feature type="binding site" evidence="2">
    <location>
        <begin position="306"/>
        <end position="307"/>
    </location>
    <ligand>
        <name>chorismate</name>
        <dbReference type="ChEBI" id="CHEBI:29748"/>
    </ligand>
</feature>
<feature type="binding site" evidence="2">
    <location>
        <position position="333"/>
    </location>
    <ligand>
        <name>Mg(2+)</name>
        <dbReference type="ChEBI" id="CHEBI:18420"/>
    </ligand>
</feature>
<feature type="binding site" evidence="2">
    <location>
        <position position="421"/>
    </location>
    <ligand>
        <name>chorismate</name>
        <dbReference type="ChEBI" id="CHEBI:29748"/>
    </ligand>
</feature>
<feature type="binding site" evidence="2">
    <location>
        <position position="441"/>
    </location>
    <ligand>
        <name>chorismate</name>
        <dbReference type="ChEBI" id="CHEBI:29748"/>
    </ligand>
</feature>
<feature type="binding site" evidence="2">
    <location>
        <begin position="455"/>
        <end position="457"/>
    </location>
    <ligand>
        <name>chorismate</name>
        <dbReference type="ChEBI" id="CHEBI:29748"/>
    </ligand>
</feature>
<feature type="binding site" evidence="2">
    <location>
        <position position="457"/>
    </location>
    <ligand>
        <name>chorismate</name>
        <dbReference type="ChEBI" id="CHEBI:29748"/>
    </ligand>
</feature>
<feature type="binding site" evidence="2">
    <location>
        <position position="470"/>
    </location>
    <ligand>
        <name>Mg(2+)</name>
        <dbReference type="ChEBI" id="CHEBI:18420"/>
    </ligand>
</feature>
<reference key="1">
    <citation type="journal article" date="1999" name="Mol. Microbiol.">
        <title>The opcA and (psi)opcB regions in Neisseria: genes, pseudogenes, deletions, insertion elements and DNA islands.</title>
        <authorList>
            <person name="Zhu P."/>
            <person name="Morelli G."/>
            <person name="Achtman M."/>
        </authorList>
    </citation>
    <scope>NUCLEOTIDE SEQUENCE [GENOMIC DNA]</scope>
    <source>
        <strain>DSM 15465 / Z2491</strain>
    </source>
</reference>
<reference key="2">
    <citation type="journal article" date="2000" name="Nature">
        <title>Complete DNA sequence of a serogroup A strain of Neisseria meningitidis Z2491.</title>
        <authorList>
            <person name="Parkhill J."/>
            <person name="Achtman M."/>
            <person name="James K.D."/>
            <person name="Bentley S.D."/>
            <person name="Churcher C.M."/>
            <person name="Klee S.R."/>
            <person name="Morelli G."/>
            <person name="Basham D."/>
            <person name="Brown D."/>
            <person name="Chillingworth T."/>
            <person name="Davies R.M."/>
            <person name="Davis P."/>
            <person name="Devlin K."/>
            <person name="Feltwell T."/>
            <person name="Hamlin N."/>
            <person name="Holroyd S."/>
            <person name="Jagels K."/>
            <person name="Leather S."/>
            <person name="Moule S."/>
            <person name="Mungall K.L."/>
            <person name="Quail M.A."/>
            <person name="Rajandream M.A."/>
            <person name="Rutherford K.M."/>
            <person name="Simmonds M."/>
            <person name="Skelton J."/>
            <person name="Whitehead S."/>
            <person name="Spratt B.G."/>
            <person name="Barrell B.G."/>
        </authorList>
    </citation>
    <scope>NUCLEOTIDE SEQUENCE [LARGE SCALE GENOMIC DNA]</scope>
    <source>
        <strain>DSM 15465 / Z2491</strain>
    </source>
</reference>
<organism>
    <name type="scientific">Neisseria meningitidis serogroup A / serotype 4A (strain DSM 15465 / Z2491)</name>
    <dbReference type="NCBI Taxonomy" id="122587"/>
    <lineage>
        <taxon>Bacteria</taxon>
        <taxon>Pseudomonadati</taxon>
        <taxon>Pseudomonadota</taxon>
        <taxon>Betaproteobacteria</taxon>
        <taxon>Neisseriales</taxon>
        <taxon>Neisseriaceae</taxon>
        <taxon>Neisseria</taxon>
    </lineage>
</organism>
<sequence length="491" mass="54722">MISKQEYQAQAAQGYNRIPLVQELLADLDTPLSLYLKLANRPYTYLLESVVGGERFGRYSFIGLPCSHYLKASGKHVDVYQNGEIVEQHDGNPLPFIEAFHNRFKTPEIPSLPRFTGGLVGYFGYETIYNFEHFAHRLKNTTKADPLGTPDILLMLSQELAVIDNLSGKIHLVVYADPSQPDGYERARERLEDIRTQLRQSCAIPLSLGSKHTEAVSEFGEEPFKACVNKIKDYIFAGDCMQVVPSQRMSMEFTDSPLALYRALRTLNPSPYLFYYDFGDFHIVGSSPEILVRRERDDVIVRPIAGTRLRGKTPAEDLANEQDLLSDAKEIAEHVMLIDLGRNDVGRISKTGEVKVTDKMVIEKYSHVMHIVSNVEGRLKDGMTNMDILAATFPAGTLSGAPKVRAMEIIEEVEPSKRGIYGGAVGVWGFNNDMDLAIAIRTAVVKNNTLYVQSGAGVVADSDPASEWQETQNKARAVIRAAQMVQEGLDK</sequence>
<evidence type="ECO:0000250" key="1"/>
<evidence type="ECO:0000250" key="2">
    <source>
        <dbReference type="UniProtKB" id="P00897"/>
    </source>
</evidence>
<evidence type="ECO:0000305" key="3"/>